<organism>
    <name type="scientific">Bartonella henselae (strain ATCC 49882 / DSM 28221 / CCUG 30454 / Houston 1)</name>
    <name type="common">Rochalimaea henselae</name>
    <dbReference type="NCBI Taxonomy" id="283166"/>
    <lineage>
        <taxon>Bacteria</taxon>
        <taxon>Pseudomonadati</taxon>
        <taxon>Pseudomonadota</taxon>
        <taxon>Alphaproteobacteria</taxon>
        <taxon>Hyphomicrobiales</taxon>
        <taxon>Bartonellaceae</taxon>
        <taxon>Bartonella</taxon>
    </lineage>
</organism>
<name>KCY_BARHE</name>
<evidence type="ECO:0000255" key="1">
    <source>
        <dbReference type="HAMAP-Rule" id="MF_00238"/>
    </source>
</evidence>
<accession>Q6G546</accession>
<gene>
    <name evidence="1" type="primary">cmk</name>
    <name type="ordered locus">BH00940</name>
</gene>
<comment type="catalytic activity">
    <reaction evidence="1">
        <text>CMP + ATP = CDP + ADP</text>
        <dbReference type="Rhea" id="RHEA:11600"/>
        <dbReference type="ChEBI" id="CHEBI:30616"/>
        <dbReference type="ChEBI" id="CHEBI:58069"/>
        <dbReference type="ChEBI" id="CHEBI:60377"/>
        <dbReference type="ChEBI" id="CHEBI:456216"/>
        <dbReference type="EC" id="2.7.4.25"/>
    </reaction>
</comment>
<comment type="catalytic activity">
    <reaction evidence="1">
        <text>dCMP + ATP = dCDP + ADP</text>
        <dbReference type="Rhea" id="RHEA:25094"/>
        <dbReference type="ChEBI" id="CHEBI:30616"/>
        <dbReference type="ChEBI" id="CHEBI:57566"/>
        <dbReference type="ChEBI" id="CHEBI:58593"/>
        <dbReference type="ChEBI" id="CHEBI:456216"/>
        <dbReference type="EC" id="2.7.4.25"/>
    </reaction>
</comment>
<comment type="subcellular location">
    <subcellularLocation>
        <location evidence="1">Cytoplasm</location>
    </subcellularLocation>
</comment>
<comment type="similarity">
    <text evidence="1">Belongs to the cytidylate kinase family. Type 1 subfamily.</text>
</comment>
<feature type="chain" id="PRO_0000131882" description="Cytidylate kinase">
    <location>
        <begin position="1"/>
        <end position="215"/>
    </location>
</feature>
<feature type="binding site" evidence="1">
    <location>
        <begin position="10"/>
        <end position="18"/>
    </location>
    <ligand>
        <name>ATP</name>
        <dbReference type="ChEBI" id="CHEBI:30616"/>
    </ligand>
</feature>
<proteinExistence type="inferred from homology"/>
<dbReference type="EC" id="2.7.4.25" evidence="1"/>
<dbReference type="EMBL" id="BX897699">
    <property type="protein sequence ID" value="CAF26910.1"/>
    <property type="molecule type" value="Genomic_DNA"/>
</dbReference>
<dbReference type="RefSeq" id="WP_011180055.1">
    <property type="nucleotide sequence ID" value="NZ_LRIJ02000001.1"/>
</dbReference>
<dbReference type="SMR" id="Q6G546"/>
<dbReference type="PaxDb" id="283166-BH00940"/>
<dbReference type="EnsemblBacteria" id="CAF26910">
    <property type="protein sequence ID" value="CAF26910"/>
    <property type="gene ID" value="BH00940"/>
</dbReference>
<dbReference type="GeneID" id="92986380"/>
<dbReference type="KEGG" id="bhe:BH00940"/>
<dbReference type="eggNOG" id="COG0283">
    <property type="taxonomic scope" value="Bacteria"/>
</dbReference>
<dbReference type="OrthoDB" id="9807434at2"/>
<dbReference type="Proteomes" id="UP000000421">
    <property type="component" value="Chromosome"/>
</dbReference>
<dbReference type="GO" id="GO:0005737">
    <property type="term" value="C:cytoplasm"/>
    <property type="evidence" value="ECO:0007669"/>
    <property type="project" value="UniProtKB-SubCell"/>
</dbReference>
<dbReference type="GO" id="GO:0005524">
    <property type="term" value="F:ATP binding"/>
    <property type="evidence" value="ECO:0007669"/>
    <property type="project" value="UniProtKB-UniRule"/>
</dbReference>
<dbReference type="GO" id="GO:0036430">
    <property type="term" value="F:CMP kinase activity"/>
    <property type="evidence" value="ECO:0007669"/>
    <property type="project" value="RHEA"/>
</dbReference>
<dbReference type="GO" id="GO:0036431">
    <property type="term" value="F:dCMP kinase activity"/>
    <property type="evidence" value="ECO:0007669"/>
    <property type="project" value="RHEA"/>
</dbReference>
<dbReference type="GO" id="GO:0006220">
    <property type="term" value="P:pyrimidine nucleotide metabolic process"/>
    <property type="evidence" value="ECO:0007669"/>
    <property type="project" value="UniProtKB-UniRule"/>
</dbReference>
<dbReference type="CDD" id="cd02020">
    <property type="entry name" value="CMPK"/>
    <property type="match status" value="1"/>
</dbReference>
<dbReference type="Gene3D" id="3.40.50.300">
    <property type="entry name" value="P-loop containing nucleotide triphosphate hydrolases"/>
    <property type="match status" value="1"/>
</dbReference>
<dbReference type="HAMAP" id="MF_00238">
    <property type="entry name" value="Cytidyl_kinase_type1"/>
    <property type="match status" value="1"/>
</dbReference>
<dbReference type="InterPro" id="IPR003136">
    <property type="entry name" value="Cytidylate_kin"/>
</dbReference>
<dbReference type="InterPro" id="IPR011994">
    <property type="entry name" value="Cytidylate_kinase_dom"/>
</dbReference>
<dbReference type="InterPro" id="IPR027417">
    <property type="entry name" value="P-loop_NTPase"/>
</dbReference>
<dbReference type="NCBIfam" id="TIGR00017">
    <property type="entry name" value="cmk"/>
    <property type="match status" value="1"/>
</dbReference>
<dbReference type="Pfam" id="PF02224">
    <property type="entry name" value="Cytidylate_kin"/>
    <property type="match status" value="1"/>
</dbReference>
<dbReference type="SUPFAM" id="SSF52540">
    <property type="entry name" value="P-loop containing nucleoside triphosphate hydrolases"/>
    <property type="match status" value="1"/>
</dbReference>
<sequence length="215" mass="23709">MKPFVIAIDGPAASGKGTLARKIATHYHLHYLDTGLTYRGVAHALLQQKLALDDEKNALVYARELDFNTLNPALLSSHELGNAASKIAIIPTVRETLVAKQRNFAKILPGSVLDGRDIGTIVCPDADVKLYVLANVQIRAKRRYQEILKKGAQADYHEILVNLEQRDSRDITRKQSPLKQAKDAYLLDTSELSIEATFTVACALIDPIIKARIIG</sequence>
<reference key="1">
    <citation type="journal article" date="2004" name="Proc. Natl. Acad. Sci. U.S.A.">
        <title>The louse-borne human pathogen Bartonella quintana is a genomic derivative of the zoonotic agent Bartonella henselae.</title>
        <authorList>
            <person name="Alsmark U.C.M."/>
            <person name="Frank A.C."/>
            <person name="Karlberg E.O."/>
            <person name="Legault B.-A."/>
            <person name="Ardell D.H."/>
            <person name="Canbaeck B."/>
            <person name="Eriksson A.-S."/>
            <person name="Naeslund A.K."/>
            <person name="Handley S.A."/>
            <person name="Huvet M."/>
            <person name="La Scola B."/>
            <person name="Holmberg M."/>
            <person name="Andersson S.G.E."/>
        </authorList>
    </citation>
    <scope>NUCLEOTIDE SEQUENCE [LARGE SCALE GENOMIC DNA]</scope>
    <source>
        <strain>ATCC 49882 / DSM 28221 / CCUG 30454 / Houston 1</strain>
    </source>
</reference>
<protein>
    <recommendedName>
        <fullName evidence="1">Cytidylate kinase</fullName>
        <shortName evidence="1">CK</shortName>
        <ecNumber evidence="1">2.7.4.25</ecNumber>
    </recommendedName>
    <alternativeName>
        <fullName evidence="1">Cytidine monophosphate kinase</fullName>
        <shortName evidence="1">CMP kinase</shortName>
    </alternativeName>
</protein>
<keyword id="KW-0067">ATP-binding</keyword>
<keyword id="KW-0963">Cytoplasm</keyword>
<keyword id="KW-0418">Kinase</keyword>
<keyword id="KW-0547">Nucleotide-binding</keyword>
<keyword id="KW-0808">Transferase</keyword>